<reference key="1">
    <citation type="journal article" date="2009" name="Plant Mol. Biol.">
        <title>Insights into corn genes derived from large-scale cDNA sequencing.</title>
        <authorList>
            <person name="Alexandrov N.N."/>
            <person name="Brover V.V."/>
            <person name="Freidin S."/>
            <person name="Troukhan M.E."/>
            <person name="Tatarinova T.V."/>
            <person name="Zhang H."/>
            <person name="Swaller T.J."/>
            <person name="Lu Y.-P."/>
            <person name="Bouck J."/>
            <person name="Flavell R.B."/>
            <person name="Feldmann K.A."/>
        </authorList>
    </citation>
    <scope>NUCLEOTIDE SEQUENCE [LARGE SCALE MRNA]</scope>
</reference>
<reference key="2">
    <citation type="journal article" date="2014" name="Plant Physiol.">
        <title>Functional and evolutionary analysis of the CASPARIAN STRIP MEMBRANE DOMAIN PROTEIN family.</title>
        <authorList>
            <person name="Roppolo D."/>
            <person name="Boeckmann B."/>
            <person name="Pfister A."/>
            <person name="Boutet E."/>
            <person name="Rubio M.C."/>
            <person name="Denervaud-Tendon V."/>
            <person name="Vermeer J.E."/>
            <person name="Gheyselinck J."/>
            <person name="Xenarios I."/>
            <person name="Geldner N."/>
        </authorList>
    </citation>
    <scope>GENE FAMILY</scope>
    <scope>NOMENCLATURE</scope>
</reference>
<accession>B6TUH4</accession>
<sequence>MDLERGDKKPPPPPPPAPRTAAATTTTTTTPACSGKKRPPLRDSLVALQPVLLRAAAALAAAAAAAVMALDAQSYTAVVAIVGTRPLTQTFTAKFSDTPAFVYFVIANAIAAAYNLLVLLVRRRRRTTAGLVVRMLDMVVMALLATGAAAAASMAELGRNGNARARWNPVCDRFGSFCRRGGAALAASFVGVALMLALNLLSAASGAGC</sequence>
<name>CSPL2_MAIZE</name>
<evidence type="ECO:0000250" key="1"/>
<evidence type="ECO:0000255" key="2"/>
<evidence type="ECO:0000256" key="3">
    <source>
        <dbReference type="SAM" id="MobiDB-lite"/>
    </source>
</evidence>
<evidence type="ECO:0000305" key="4"/>
<feature type="chain" id="PRO_0000370274" description="CASP-like protein 1B1">
    <location>
        <begin position="1"/>
        <end position="209"/>
    </location>
</feature>
<feature type="topological domain" description="Cytoplasmic" evidence="2">
    <location>
        <begin position="1"/>
        <end position="49"/>
    </location>
</feature>
<feature type="transmembrane region" description="Helical" evidence="2">
    <location>
        <begin position="50"/>
        <end position="70"/>
    </location>
</feature>
<feature type="topological domain" description="Extracellular" evidence="2">
    <location>
        <begin position="71"/>
        <end position="100"/>
    </location>
</feature>
<feature type="transmembrane region" description="Helical" evidence="2">
    <location>
        <begin position="101"/>
        <end position="121"/>
    </location>
</feature>
<feature type="topological domain" description="Cytoplasmic" evidence="2">
    <location>
        <begin position="122"/>
        <end position="134"/>
    </location>
</feature>
<feature type="transmembrane region" description="Helical" evidence="2">
    <location>
        <begin position="135"/>
        <end position="155"/>
    </location>
</feature>
<feature type="topological domain" description="Extracellular" evidence="2">
    <location>
        <begin position="156"/>
        <end position="180"/>
    </location>
</feature>
<feature type="transmembrane region" description="Helical" evidence="2">
    <location>
        <begin position="181"/>
        <end position="201"/>
    </location>
</feature>
<feature type="topological domain" description="Cytoplasmic" evidence="2">
    <location>
        <begin position="202"/>
        <end position="209"/>
    </location>
</feature>
<feature type="region of interest" description="Disordered" evidence="3">
    <location>
        <begin position="1"/>
        <end position="39"/>
    </location>
</feature>
<feature type="compositionally biased region" description="Basic and acidic residues" evidence="3">
    <location>
        <begin position="1"/>
        <end position="10"/>
    </location>
</feature>
<feature type="compositionally biased region" description="Low complexity" evidence="3">
    <location>
        <begin position="19"/>
        <end position="32"/>
    </location>
</feature>
<comment type="subunit">
    <text evidence="1">Homodimer and heterodimers.</text>
</comment>
<comment type="subcellular location">
    <subcellularLocation>
        <location evidence="1">Cell membrane</location>
        <topology evidence="1">Multi-pass membrane protein</topology>
    </subcellularLocation>
</comment>
<comment type="similarity">
    <text evidence="4">Belongs to the Casparian strip membrane proteins (CASP) family.</text>
</comment>
<keyword id="KW-1003">Cell membrane</keyword>
<keyword id="KW-0472">Membrane</keyword>
<keyword id="KW-1185">Reference proteome</keyword>
<keyword id="KW-0812">Transmembrane</keyword>
<keyword id="KW-1133">Transmembrane helix</keyword>
<dbReference type="EMBL" id="EU968639">
    <property type="protein sequence ID" value="ACG40757.1"/>
    <property type="molecule type" value="mRNA"/>
</dbReference>
<dbReference type="FunCoup" id="B6TUH4">
    <property type="interactions" value="950"/>
</dbReference>
<dbReference type="PaxDb" id="4577-GRMZM2G035444_P01"/>
<dbReference type="eggNOG" id="ENOG502RYH6">
    <property type="taxonomic scope" value="Eukaryota"/>
</dbReference>
<dbReference type="InParanoid" id="B6TUH4"/>
<dbReference type="Proteomes" id="UP000007305">
    <property type="component" value="Unplaced"/>
</dbReference>
<dbReference type="ExpressionAtlas" id="B6TUH4">
    <property type="expression patterns" value="baseline and differential"/>
</dbReference>
<dbReference type="GO" id="GO:0005886">
    <property type="term" value="C:plasma membrane"/>
    <property type="evidence" value="ECO:0007669"/>
    <property type="project" value="UniProtKB-SubCell"/>
</dbReference>
<dbReference type="InterPro" id="IPR006459">
    <property type="entry name" value="CASP/CASPL"/>
</dbReference>
<dbReference type="InterPro" id="IPR006702">
    <property type="entry name" value="CASP_dom"/>
</dbReference>
<dbReference type="InterPro" id="IPR044173">
    <property type="entry name" value="CASPL"/>
</dbReference>
<dbReference type="NCBIfam" id="TIGR01569">
    <property type="entry name" value="A_tha_TIGR01569"/>
    <property type="match status" value="1"/>
</dbReference>
<dbReference type="PANTHER" id="PTHR36488">
    <property type="entry name" value="CASP-LIKE PROTEIN 1U1"/>
    <property type="match status" value="1"/>
</dbReference>
<dbReference type="PANTHER" id="PTHR36488:SF8">
    <property type="entry name" value="CASP-LIKE PROTEIN 1U1"/>
    <property type="match status" value="1"/>
</dbReference>
<dbReference type="Pfam" id="PF04535">
    <property type="entry name" value="CASP_dom"/>
    <property type="match status" value="1"/>
</dbReference>
<proteinExistence type="evidence at transcript level"/>
<protein>
    <recommendedName>
        <fullName>CASP-like protein 1B1</fullName>
        <shortName>ZmCASPL1B1</shortName>
    </recommendedName>
</protein>
<organism>
    <name type="scientific">Zea mays</name>
    <name type="common">Maize</name>
    <dbReference type="NCBI Taxonomy" id="4577"/>
    <lineage>
        <taxon>Eukaryota</taxon>
        <taxon>Viridiplantae</taxon>
        <taxon>Streptophyta</taxon>
        <taxon>Embryophyta</taxon>
        <taxon>Tracheophyta</taxon>
        <taxon>Spermatophyta</taxon>
        <taxon>Magnoliopsida</taxon>
        <taxon>Liliopsida</taxon>
        <taxon>Poales</taxon>
        <taxon>Poaceae</taxon>
        <taxon>PACMAD clade</taxon>
        <taxon>Panicoideae</taxon>
        <taxon>Andropogonodae</taxon>
        <taxon>Andropogoneae</taxon>
        <taxon>Tripsacinae</taxon>
        <taxon>Zea</taxon>
    </lineage>
</organism>